<accession>A0A1B0GTI1</accession>
<reference key="1">
    <citation type="journal article" date="2003" name="Nature">
        <title>The DNA sequence of human chromosome 7.</title>
        <authorList>
            <person name="Hillier L.W."/>
            <person name="Fulton R.S."/>
            <person name="Fulton L.A."/>
            <person name="Graves T.A."/>
            <person name="Pepin K.H."/>
            <person name="Wagner-McPherson C."/>
            <person name="Layman D."/>
            <person name="Maas J."/>
            <person name="Jaeger S."/>
            <person name="Walker R."/>
            <person name="Wylie K."/>
            <person name="Sekhon M."/>
            <person name="Becker M.C."/>
            <person name="O'Laughlin M.D."/>
            <person name="Schaller M.E."/>
            <person name="Fewell G.A."/>
            <person name="Delehaunty K.D."/>
            <person name="Miner T.L."/>
            <person name="Nash W.E."/>
            <person name="Cordes M."/>
            <person name="Du H."/>
            <person name="Sun H."/>
            <person name="Edwards J."/>
            <person name="Bradshaw-Cordum H."/>
            <person name="Ali J."/>
            <person name="Andrews S."/>
            <person name="Isak A."/>
            <person name="Vanbrunt A."/>
            <person name="Nguyen C."/>
            <person name="Du F."/>
            <person name="Lamar B."/>
            <person name="Courtney L."/>
            <person name="Kalicki J."/>
            <person name="Ozersky P."/>
            <person name="Bielicki L."/>
            <person name="Scott K."/>
            <person name="Holmes A."/>
            <person name="Harkins R."/>
            <person name="Harris A."/>
            <person name="Strong C.M."/>
            <person name="Hou S."/>
            <person name="Tomlinson C."/>
            <person name="Dauphin-Kohlberg S."/>
            <person name="Kozlowicz-Reilly A."/>
            <person name="Leonard S."/>
            <person name="Rohlfing T."/>
            <person name="Rock S.M."/>
            <person name="Tin-Wollam A.-M."/>
            <person name="Abbott A."/>
            <person name="Minx P."/>
            <person name="Maupin R."/>
            <person name="Strowmatt C."/>
            <person name="Latreille P."/>
            <person name="Miller N."/>
            <person name="Johnson D."/>
            <person name="Murray J."/>
            <person name="Woessner J.P."/>
            <person name="Wendl M.C."/>
            <person name="Yang S.-P."/>
            <person name="Schultz B.R."/>
            <person name="Wallis J.W."/>
            <person name="Spieth J."/>
            <person name="Bieri T.A."/>
            <person name="Nelson J.O."/>
            <person name="Berkowicz N."/>
            <person name="Wohldmann P.E."/>
            <person name="Cook L.L."/>
            <person name="Hickenbotham M.T."/>
            <person name="Eldred J."/>
            <person name="Williams D."/>
            <person name="Bedell J.A."/>
            <person name="Mardis E.R."/>
            <person name="Clifton S.W."/>
            <person name="Chissoe S.L."/>
            <person name="Marra M.A."/>
            <person name="Raymond C."/>
            <person name="Haugen E."/>
            <person name="Gillett W."/>
            <person name="Zhou Y."/>
            <person name="James R."/>
            <person name="Phelps K."/>
            <person name="Iadanoto S."/>
            <person name="Bubb K."/>
            <person name="Simms E."/>
            <person name="Levy R."/>
            <person name="Clendenning J."/>
            <person name="Kaul R."/>
            <person name="Kent W.J."/>
            <person name="Furey T.S."/>
            <person name="Baertsch R.A."/>
            <person name="Brent M.R."/>
            <person name="Keibler E."/>
            <person name="Flicek P."/>
            <person name="Bork P."/>
            <person name="Suyama M."/>
            <person name="Bailey J.A."/>
            <person name="Portnoy M.E."/>
            <person name="Torrents D."/>
            <person name="Chinwalla A.T."/>
            <person name="Gish W.R."/>
            <person name="Eddy S.R."/>
            <person name="McPherson J.D."/>
            <person name="Olson M.V."/>
            <person name="Eichler E.E."/>
            <person name="Green E.D."/>
            <person name="Waterston R.H."/>
            <person name="Wilson R.K."/>
        </authorList>
    </citation>
    <scope>NUCLEOTIDE SEQUENCE [LARGE SCALE GENOMIC DNA]</scope>
</reference>
<proteinExistence type="predicted"/>
<name>CC201_HUMAN</name>
<protein>
    <recommendedName>
        <fullName evidence="3">Coiled-coil domain-containing protein 201</fullName>
    </recommendedName>
</protein>
<keyword id="KW-0175">Coiled coil</keyword>
<keyword id="KW-1185">Reference proteome</keyword>
<dbReference type="EMBL" id="AC096582">
    <property type="status" value="NOT_ANNOTATED_CDS"/>
    <property type="molecule type" value="Genomic_DNA"/>
</dbReference>
<dbReference type="CCDS" id="CCDS94096.1"/>
<dbReference type="RefSeq" id="NP_001382164.1">
    <property type="nucleotide sequence ID" value="NM_001395235.1"/>
</dbReference>
<dbReference type="SMR" id="A0A1B0GTI1"/>
<dbReference type="STRING" id="9606.ENSP00000489712"/>
<dbReference type="BioMuta" id="ENSG00000283247"/>
<dbReference type="MassIVE" id="A0A1B0GTI1"/>
<dbReference type="PeptideAtlas" id="A0A1B0GTI1"/>
<dbReference type="Ensembl" id="ENST00000636578.2">
    <property type="protein sequence ID" value="ENSP00000489712.1"/>
    <property type="gene ID" value="ENSG00000283247.2"/>
</dbReference>
<dbReference type="GeneID" id="114515518"/>
<dbReference type="MANE-Select" id="ENST00000636578.2">
    <property type="protein sequence ID" value="ENSP00000489712.1"/>
    <property type="RefSeq nucleotide sequence ID" value="NM_001395235.1"/>
    <property type="RefSeq protein sequence ID" value="NP_001382164.1"/>
</dbReference>
<dbReference type="AGR" id="HGNC:54081"/>
<dbReference type="GeneCards" id="CCDC201"/>
<dbReference type="HGNC" id="HGNC:54081">
    <property type="gene designation" value="CCDC201"/>
</dbReference>
<dbReference type="HPA" id="ENSG00000283247">
    <property type="expression patterns" value="Not detected"/>
</dbReference>
<dbReference type="neXtProt" id="NX_A0A1B0GTI1"/>
<dbReference type="OpenTargets" id="ENSG00000283247"/>
<dbReference type="VEuPathDB" id="HostDB:ENSG00000283247"/>
<dbReference type="GeneTree" id="ENSGT00490000044045"/>
<dbReference type="InParanoid" id="A0A1B0GTI1"/>
<dbReference type="OMA" id="SWHQNPG"/>
<dbReference type="OrthoDB" id="9907103at2759"/>
<dbReference type="PAN-GO" id="A0A1B0GTI1">
    <property type="GO annotations" value="0 GO annotations based on evolutionary models"/>
</dbReference>
<dbReference type="PRO" id="PR:A0A1B0GTI1"/>
<dbReference type="Proteomes" id="UP000005640">
    <property type="component" value="Chromosome 7"/>
</dbReference>
<dbReference type="RNAct" id="A0A1B0GTI1">
    <property type="molecule type" value="protein"/>
</dbReference>
<dbReference type="Bgee" id="ENSG00000283247">
    <property type="expression patterns" value="Expressed in placenta and 2 other cell types or tissues"/>
</dbReference>
<sequence length="187" mass="20621">MEPGVQDLGLSSSEDESPSLAIRSPTLRKPLKHSTPEEAALGWSPRPSGGASYLSGSPMPAHFSQDLASHPAGVSPPATVRKRRLSTLWASKESSLDLSAPGEEPPTSASLTQRQRQRQQQQQQQESLRAKSWAQNPGLPGILNTTGRKRRDPKKRAAAMERVRQWEIYVLQNIEEATQHELTIEDD</sequence>
<gene>
    <name evidence="4" type="primary">CCDC201</name>
</gene>
<evidence type="ECO:0000255" key="1"/>
<evidence type="ECO:0000256" key="2">
    <source>
        <dbReference type="SAM" id="MobiDB-lite"/>
    </source>
</evidence>
<evidence type="ECO:0000305" key="3"/>
<evidence type="ECO:0000312" key="4">
    <source>
        <dbReference type="HGNC" id="HGNC:54081"/>
    </source>
</evidence>
<feature type="chain" id="PRO_0000447322" description="Coiled-coil domain-containing protein 201">
    <location>
        <begin position="1"/>
        <end position="187"/>
    </location>
</feature>
<feature type="region of interest" description="Disordered" evidence="2">
    <location>
        <begin position="1"/>
        <end position="79"/>
    </location>
</feature>
<feature type="region of interest" description="Disordered" evidence="2">
    <location>
        <begin position="92"/>
        <end position="159"/>
    </location>
</feature>
<feature type="coiled-coil region" evidence="1">
    <location>
        <begin position="111"/>
        <end position="131"/>
    </location>
</feature>
<feature type="compositionally biased region" description="Basic residues" evidence="2">
    <location>
        <begin position="147"/>
        <end position="157"/>
    </location>
</feature>
<organism>
    <name type="scientific">Homo sapiens</name>
    <name type="common">Human</name>
    <dbReference type="NCBI Taxonomy" id="9606"/>
    <lineage>
        <taxon>Eukaryota</taxon>
        <taxon>Metazoa</taxon>
        <taxon>Chordata</taxon>
        <taxon>Craniata</taxon>
        <taxon>Vertebrata</taxon>
        <taxon>Euteleostomi</taxon>
        <taxon>Mammalia</taxon>
        <taxon>Eutheria</taxon>
        <taxon>Euarchontoglires</taxon>
        <taxon>Primates</taxon>
        <taxon>Haplorrhini</taxon>
        <taxon>Catarrhini</taxon>
        <taxon>Hominidae</taxon>
        <taxon>Homo</taxon>
    </lineage>
</organism>